<comment type="function">
    <text evidence="1">Specifically methylates the N4 position of cytidine in position 1402 (C1402) of 16S rRNA.</text>
</comment>
<comment type="catalytic activity">
    <reaction evidence="1">
        <text>cytidine(1402) in 16S rRNA + S-adenosyl-L-methionine = N(4)-methylcytidine(1402) in 16S rRNA + S-adenosyl-L-homocysteine + H(+)</text>
        <dbReference type="Rhea" id="RHEA:42928"/>
        <dbReference type="Rhea" id="RHEA-COMP:10286"/>
        <dbReference type="Rhea" id="RHEA-COMP:10287"/>
        <dbReference type="ChEBI" id="CHEBI:15378"/>
        <dbReference type="ChEBI" id="CHEBI:57856"/>
        <dbReference type="ChEBI" id="CHEBI:59789"/>
        <dbReference type="ChEBI" id="CHEBI:74506"/>
        <dbReference type="ChEBI" id="CHEBI:82748"/>
        <dbReference type="EC" id="2.1.1.199"/>
    </reaction>
</comment>
<comment type="subcellular location">
    <subcellularLocation>
        <location evidence="1">Cytoplasm</location>
    </subcellularLocation>
</comment>
<comment type="similarity">
    <text evidence="1">Belongs to the methyltransferase superfamily. RsmH family.</text>
</comment>
<dbReference type="EC" id="2.1.1.199" evidence="1"/>
<dbReference type="EMBL" id="BA000018">
    <property type="protein sequence ID" value="BAB42274.1"/>
    <property type="molecule type" value="Genomic_DNA"/>
</dbReference>
<dbReference type="PIR" id="F89889">
    <property type="entry name" value="F89889"/>
</dbReference>
<dbReference type="RefSeq" id="WP_000468384.1">
    <property type="nucleotide sequence ID" value="NC_002745.2"/>
</dbReference>
<dbReference type="SMR" id="P60392"/>
<dbReference type="EnsemblBacteria" id="BAB42274">
    <property type="protein sequence ID" value="BAB42274"/>
    <property type="gene ID" value="BAB42274"/>
</dbReference>
<dbReference type="KEGG" id="sau:SA1022"/>
<dbReference type="HOGENOM" id="CLU_038422_2_0_9"/>
<dbReference type="PHI-base" id="PHI:4961"/>
<dbReference type="GO" id="GO:0005737">
    <property type="term" value="C:cytoplasm"/>
    <property type="evidence" value="ECO:0007669"/>
    <property type="project" value="UniProtKB-SubCell"/>
</dbReference>
<dbReference type="GO" id="GO:0071424">
    <property type="term" value="F:rRNA (cytosine-N4-)-methyltransferase activity"/>
    <property type="evidence" value="ECO:0007669"/>
    <property type="project" value="UniProtKB-UniRule"/>
</dbReference>
<dbReference type="GO" id="GO:0070475">
    <property type="term" value="P:rRNA base methylation"/>
    <property type="evidence" value="ECO:0007669"/>
    <property type="project" value="UniProtKB-UniRule"/>
</dbReference>
<dbReference type="FunFam" id="1.10.150.170:FF:000001">
    <property type="entry name" value="Ribosomal RNA small subunit methyltransferase H"/>
    <property type="match status" value="1"/>
</dbReference>
<dbReference type="Gene3D" id="1.10.150.170">
    <property type="entry name" value="Putative methyltransferase TM0872, insert domain"/>
    <property type="match status" value="1"/>
</dbReference>
<dbReference type="Gene3D" id="3.40.50.150">
    <property type="entry name" value="Vaccinia Virus protein VP39"/>
    <property type="match status" value="1"/>
</dbReference>
<dbReference type="HAMAP" id="MF_01007">
    <property type="entry name" value="16SrRNA_methyltr_H"/>
    <property type="match status" value="1"/>
</dbReference>
<dbReference type="InterPro" id="IPR002903">
    <property type="entry name" value="RsmH"/>
</dbReference>
<dbReference type="InterPro" id="IPR023397">
    <property type="entry name" value="SAM-dep_MeTrfase_MraW_recog"/>
</dbReference>
<dbReference type="InterPro" id="IPR029063">
    <property type="entry name" value="SAM-dependent_MTases_sf"/>
</dbReference>
<dbReference type="NCBIfam" id="TIGR00006">
    <property type="entry name" value="16S rRNA (cytosine(1402)-N(4))-methyltransferase RsmH"/>
    <property type="match status" value="1"/>
</dbReference>
<dbReference type="PANTHER" id="PTHR11265:SF0">
    <property type="entry name" value="12S RRNA N4-METHYLCYTIDINE METHYLTRANSFERASE"/>
    <property type="match status" value="1"/>
</dbReference>
<dbReference type="PANTHER" id="PTHR11265">
    <property type="entry name" value="S-ADENOSYL-METHYLTRANSFERASE MRAW"/>
    <property type="match status" value="1"/>
</dbReference>
<dbReference type="Pfam" id="PF01795">
    <property type="entry name" value="Methyltransf_5"/>
    <property type="match status" value="1"/>
</dbReference>
<dbReference type="PIRSF" id="PIRSF004486">
    <property type="entry name" value="MraW"/>
    <property type="match status" value="1"/>
</dbReference>
<dbReference type="SUPFAM" id="SSF81799">
    <property type="entry name" value="Putative methyltransferase TM0872, insert domain"/>
    <property type="match status" value="1"/>
</dbReference>
<dbReference type="SUPFAM" id="SSF53335">
    <property type="entry name" value="S-adenosyl-L-methionine-dependent methyltransferases"/>
    <property type="match status" value="1"/>
</dbReference>
<reference key="1">
    <citation type="journal article" date="2001" name="Lancet">
        <title>Whole genome sequencing of meticillin-resistant Staphylococcus aureus.</title>
        <authorList>
            <person name="Kuroda M."/>
            <person name="Ohta T."/>
            <person name="Uchiyama I."/>
            <person name="Baba T."/>
            <person name="Yuzawa H."/>
            <person name="Kobayashi I."/>
            <person name="Cui L."/>
            <person name="Oguchi A."/>
            <person name="Aoki K."/>
            <person name="Nagai Y."/>
            <person name="Lian J.-Q."/>
            <person name="Ito T."/>
            <person name="Kanamori M."/>
            <person name="Matsumaru H."/>
            <person name="Maruyama A."/>
            <person name="Murakami H."/>
            <person name="Hosoyama A."/>
            <person name="Mizutani-Ui Y."/>
            <person name="Takahashi N.K."/>
            <person name="Sawano T."/>
            <person name="Inoue R."/>
            <person name="Kaito C."/>
            <person name="Sekimizu K."/>
            <person name="Hirakawa H."/>
            <person name="Kuhara S."/>
            <person name="Goto S."/>
            <person name="Yabuzaki J."/>
            <person name="Kanehisa M."/>
            <person name="Yamashita A."/>
            <person name="Oshima K."/>
            <person name="Furuya K."/>
            <person name="Yoshino C."/>
            <person name="Shiba T."/>
            <person name="Hattori M."/>
            <person name="Ogasawara N."/>
            <person name="Hayashi H."/>
            <person name="Hiramatsu K."/>
        </authorList>
    </citation>
    <scope>NUCLEOTIDE SEQUENCE [LARGE SCALE GENOMIC DNA]</scope>
    <source>
        <strain>N315</strain>
    </source>
</reference>
<reference key="2">
    <citation type="submission" date="2007-10" db="UniProtKB">
        <title>Shotgun proteomic analysis of total and membrane protein extracts of S. aureus strain N315.</title>
        <authorList>
            <person name="Vaezzadeh A.R."/>
            <person name="Deshusses J."/>
            <person name="Lescuyer P."/>
            <person name="Hochstrasser D.F."/>
        </authorList>
    </citation>
    <scope>IDENTIFICATION BY MASS SPECTROMETRY [LARGE SCALE ANALYSIS]</scope>
    <source>
        <strain>N315</strain>
    </source>
</reference>
<protein>
    <recommendedName>
        <fullName evidence="1">Ribosomal RNA small subunit methyltransferase H</fullName>
        <ecNumber evidence="1">2.1.1.199</ecNumber>
    </recommendedName>
    <alternativeName>
        <fullName evidence="1">16S rRNA m(4)C1402 methyltransferase</fullName>
    </alternativeName>
    <alternativeName>
        <fullName evidence="1">rRNA (cytosine-N(4)-)-methyltransferase RsmH</fullName>
    </alternativeName>
</protein>
<name>RSMH_STAAN</name>
<accession>P60392</accession>
<accession>O07320</accession>
<keyword id="KW-0963">Cytoplasm</keyword>
<keyword id="KW-0489">Methyltransferase</keyword>
<keyword id="KW-0698">rRNA processing</keyword>
<keyword id="KW-0949">S-adenosyl-L-methionine</keyword>
<keyword id="KW-0808">Transferase</keyword>
<proteinExistence type="evidence at protein level"/>
<sequence>MFHHISVMLNETIDYLNVKENGVYIDCTLGGAGHALYLLNQLNDDGRLIAIDQDQTAIDNAKEVLKDHLHKVTFVHSNFRELTQILKDLNIEKVDGIYYDLGVSSPQLDIPERGFSYHHDATLDMRMDQTQELTAYEIVNNWSYEALVKIFYRYGEEKFSKQIARRIEAHREQQPITTTLELVDIIKEGIPAKARRKGGHPAKRVFQALRIAVNDELSAFEDSIEQAIELVKVDGRISVITFHSLEDRLCKQVFQEYEKGPEVPRGLPVIPEAYTPKLKRVNRKPITATEEDLDDNNRARSAKLRVAEILK</sequence>
<evidence type="ECO:0000255" key="1">
    <source>
        <dbReference type="HAMAP-Rule" id="MF_01007"/>
    </source>
</evidence>
<gene>
    <name evidence="1" type="primary">rsmH</name>
    <name type="synonym">mraW</name>
    <name type="ordered locus">SA1022</name>
</gene>
<organism>
    <name type="scientific">Staphylococcus aureus (strain N315)</name>
    <dbReference type="NCBI Taxonomy" id="158879"/>
    <lineage>
        <taxon>Bacteria</taxon>
        <taxon>Bacillati</taxon>
        <taxon>Bacillota</taxon>
        <taxon>Bacilli</taxon>
        <taxon>Bacillales</taxon>
        <taxon>Staphylococcaceae</taxon>
        <taxon>Staphylococcus</taxon>
    </lineage>
</organism>
<feature type="chain" id="PRO_0000108707" description="Ribosomal RNA small subunit methyltransferase H">
    <location>
        <begin position="1"/>
        <end position="311"/>
    </location>
</feature>
<feature type="binding site" evidence="1">
    <location>
        <begin position="32"/>
        <end position="34"/>
    </location>
    <ligand>
        <name>S-adenosyl-L-methionine</name>
        <dbReference type="ChEBI" id="CHEBI:59789"/>
    </ligand>
</feature>
<feature type="binding site" evidence="1">
    <location>
        <position position="52"/>
    </location>
    <ligand>
        <name>S-adenosyl-L-methionine</name>
        <dbReference type="ChEBI" id="CHEBI:59789"/>
    </ligand>
</feature>
<feature type="binding site" evidence="1">
    <location>
        <position position="79"/>
    </location>
    <ligand>
        <name>S-adenosyl-L-methionine</name>
        <dbReference type="ChEBI" id="CHEBI:59789"/>
    </ligand>
</feature>
<feature type="binding site" evidence="1">
    <location>
        <position position="100"/>
    </location>
    <ligand>
        <name>S-adenosyl-L-methionine</name>
        <dbReference type="ChEBI" id="CHEBI:59789"/>
    </ligand>
</feature>
<feature type="binding site" evidence="1">
    <location>
        <position position="107"/>
    </location>
    <ligand>
        <name>S-adenosyl-L-methionine</name>
        <dbReference type="ChEBI" id="CHEBI:59789"/>
    </ligand>
</feature>